<reference key="1">
    <citation type="journal article" date="2003" name="Proc. Natl. Acad. Sci. U.S.A.">
        <title>Reductive genome evolution in Buchnera aphidicola.</title>
        <authorList>
            <person name="van Ham R.C.H.J."/>
            <person name="Kamerbeek J."/>
            <person name="Palacios C."/>
            <person name="Rausell C."/>
            <person name="Abascal F."/>
            <person name="Bastolla U."/>
            <person name="Fernandez J.M."/>
            <person name="Jimenez L."/>
            <person name="Postigo M."/>
            <person name="Silva F.J."/>
            <person name="Tamames J."/>
            <person name="Viguera E."/>
            <person name="Latorre A."/>
            <person name="Valencia A."/>
            <person name="Moran F."/>
            <person name="Moya A."/>
        </authorList>
    </citation>
    <scope>NUCLEOTIDE SEQUENCE [LARGE SCALE GENOMIC DNA]</scope>
    <source>
        <strain>Bp</strain>
    </source>
</reference>
<feature type="chain" id="PRO_0000211937" description="Ribosomal RNA small subunit methyltransferase I">
    <location>
        <begin position="1"/>
        <end position="292"/>
    </location>
</feature>
<organism>
    <name type="scientific">Buchnera aphidicola subsp. Baizongia pistaciae (strain Bp)</name>
    <dbReference type="NCBI Taxonomy" id="224915"/>
    <lineage>
        <taxon>Bacteria</taxon>
        <taxon>Pseudomonadati</taxon>
        <taxon>Pseudomonadota</taxon>
        <taxon>Gammaproteobacteria</taxon>
        <taxon>Enterobacterales</taxon>
        <taxon>Erwiniaceae</taxon>
        <taxon>Buchnera</taxon>
    </lineage>
</organism>
<name>RSMI_BUCBP</name>
<gene>
    <name evidence="1" type="primary">rsmI</name>
    <name type="ordered locus">bbp_085</name>
</gene>
<protein>
    <recommendedName>
        <fullName evidence="1">Ribosomal RNA small subunit methyltransferase I</fullName>
        <ecNumber evidence="1">2.1.1.198</ecNumber>
    </recommendedName>
    <alternativeName>
        <fullName evidence="1">16S rRNA 2'-O-ribose C1402 methyltransferase</fullName>
    </alternativeName>
    <alternativeName>
        <fullName evidence="1">rRNA (cytidine-2'-O-)-methyltransferase RsmI</fullName>
    </alternativeName>
</protein>
<proteinExistence type="inferred from homology"/>
<sequence length="292" mass="33305">MNAKNIKQTGILYIVPTPIGNLNDISYRAINILQHVDLIAAENIFHSQILLKHYNILTRTTSLNKDNEKIKSKTLIIQLKNKKNIALISNSGTPLINDPGFYLINECYNHIIKIVPIPGPCAAITALIASGLPANRFCYEGFLPSKQNSRCKILNQIKEEQRTIIFFEVTHRIIESITDIINILGPKRIITFAKELTKKWEIIQKNTSYNILIWLKQNYTYKKGEIVIIISGYNNKNTNLISDAVLKTLKILKTHLSFNKAIKITAGIYKLPKNYLYNYAINNTISKNNDIH</sequence>
<keyword id="KW-0963">Cytoplasm</keyword>
<keyword id="KW-0489">Methyltransferase</keyword>
<keyword id="KW-1185">Reference proteome</keyword>
<keyword id="KW-0698">rRNA processing</keyword>
<keyword id="KW-0949">S-adenosyl-L-methionine</keyword>
<keyword id="KW-0808">Transferase</keyword>
<accession>Q89AY5</accession>
<comment type="function">
    <text evidence="1">Catalyzes the 2'-O-methylation of the ribose of cytidine 1402 (C1402) in 16S rRNA.</text>
</comment>
<comment type="catalytic activity">
    <reaction evidence="1">
        <text>cytidine(1402) in 16S rRNA + S-adenosyl-L-methionine = 2'-O-methylcytidine(1402) in 16S rRNA + S-adenosyl-L-homocysteine + H(+)</text>
        <dbReference type="Rhea" id="RHEA:42924"/>
        <dbReference type="Rhea" id="RHEA-COMP:10285"/>
        <dbReference type="Rhea" id="RHEA-COMP:10286"/>
        <dbReference type="ChEBI" id="CHEBI:15378"/>
        <dbReference type="ChEBI" id="CHEBI:57856"/>
        <dbReference type="ChEBI" id="CHEBI:59789"/>
        <dbReference type="ChEBI" id="CHEBI:74495"/>
        <dbReference type="ChEBI" id="CHEBI:82748"/>
        <dbReference type="EC" id="2.1.1.198"/>
    </reaction>
</comment>
<comment type="subcellular location">
    <subcellularLocation>
        <location evidence="1">Cytoplasm</location>
    </subcellularLocation>
</comment>
<comment type="similarity">
    <text evidence="1">Belongs to the methyltransferase superfamily. RsmI family.</text>
</comment>
<evidence type="ECO:0000255" key="1">
    <source>
        <dbReference type="HAMAP-Rule" id="MF_01877"/>
    </source>
</evidence>
<dbReference type="EC" id="2.1.1.198" evidence="1"/>
<dbReference type="EMBL" id="AE016826">
    <property type="protein sequence ID" value="AAO26820.1"/>
    <property type="molecule type" value="Genomic_DNA"/>
</dbReference>
<dbReference type="RefSeq" id="WP_011091221.1">
    <property type="nucleotide sequence ID" value="NC_004545.1"/>
</dbReference>
<dbReference type="SMR" id="Q89AY5"/>
<dbReference type="STRING" id="224915.bbp_085"/>
<dbReference type="KEGG" id="bab:bbp_085"/>
<dbReference type="eggNOG" id="COG0313">
    <property type="taxonomic scope" value="Bacteria"/>
</dbReference>
<dbReference type="HOGENOM" id="CLU_044779_2_0_6"/>
<dbReference type="OrthoDB" id="9809084at2"/>
<dbReference type="Proteomes" id="UP000000601">
    <property type="component" value="Chromosome"/>
</dbReference>
<dbReference type="GO" id="GO:0005737">
    <property type="term" value="C:cytoplasm"/>
    <property type="evidence" value="ECO:0007669"/>
    <property type="project" value="UniProtKB-SubCell"/>
</dbReference>
<dbReference type="GO" id="GO:0070677">
    <property type="term" value="F:rRNA (cytosine-2'-O-)-methyltransferase activity"/>
    <property type="evidence" value="ECO:0007669"/>
    <property type="project" value="UniProtKB-UniRule"/>
</dbReference>
<dbReference type="CDD" id="cd11648">
    <property type="entry name" value="RsmI"/>
    <property type="match status" value="1"/>
</dbReference>
<dbReference type="FunFam" id="3.30.950.10:FF:000002">
    <property type="entry name" value="Ribosomal RNA small subunit methyltransferase I"/>
    <property type="match status" value="1"/>
</dbReference>
<dbReference type="Gene3D" id="3.40.1010.10">
    <property type="entry name" value="Cobalt-precorrin-4 Transmethylase, Domain 1"/>
    <property type="match status" value="1"/>
</dbReference>
<dbReference type="Gene3D" id="3.30.950.10">
    <property type="entry name" value="Methyltransferase, Cobalt-precorrin-4 Transmethylase, Domain 2"/>
    <property type="match status" value="1"/>
</dbReference>
<dbReference type="HAMAP" id="MF_01877">
    <property type="entry name" value="16SrRNA_methyltr_I"/>
    <property type="match status" value="1"/>
</dbReference>
<dbReference type="InterPro" id="IPR000878">
    <property type="entry name" value="4pyrrol_Mease"/>
</dbReference>
<dbReference type="InterPro" id="IPR035996">
    <property type="entry name" value="4pyrrol_Methylase_sf"/>
</dbReference>
<dbReference type="InterPro" id="IPR014777">
    <property type="entry name" value="4pyrrole_Mease_sub1"/>
</dbReference>
<dbReference type="InterPro" id="IPR014776">
    <property type="entry name" value="4pyrrole_Mease_sub2"/>
</dbReference>
<dbReference type="InterPro" id="IPR008189">
    <property type="entry name" value="rRNA_ssu_MeTfrase_I"/>
</dbReference>
<dbReference type="InterPro" id="IPR053910">
    <property type="entry name" value="RsmI_HTH"/>
</dbReference>
<dbReference type="InterPro" id="IPR018063">
    <property type="entry name" value="SAM_MeTrfase_RsmI_CS"/>
</dbReference>
<dbReference type="NCBIfam" id="TIGR00096">
    <property type="entry name" value="16S rRNA (cytidine(1402)-2'-O)-methyltransferase"/>
    <property type="match status" value="1"/>
</dbReference>
<dbReference type="PANTHER" id="PTHR46111">
    <property type="entry name" value="RIBOSOMAL RNA SMALL SUBUNIT METHYLTRANSFERASE I"/>
    <property type="match status" value="1"/>
</dbReference>
<dbReference type="PANTHER" id="PTHR46111:SF1">
    <property type="entry name" value="RIBOSOMAL RNA SMALL SUBUNIT METHYLTRANSFERASE I"/>
    <property type="match status" value="1"/>
</dbReference>
<dbReference type="Pfam" id="PF23016">
    <property type="entry name" value="RsmI_C"/>
    <property type="match status" value="1"/>
</dbReference>
<dbReference type="Pfam" id="PF00590">
    <property type="entry name" value="TP_methylase"/>
    <property type="match status" value="1"/>
</dbReference>
<dbReference type="PIRSF" id="PIRSF005917">
    <property type="entry name" value="MTase_YraL"/>
    <property type="match status" value="1"/>
</dbReference>
<dbReference type="SUPFAM" id="SSF53790">
    <property type="entry name" value="Tetrapyrrole methylase"/>
    <property type="match status" value="1"/>
</dbReference>
<dbReference type="PROSITE" id="PS01296">
    <property type="entry name" value="RSMI"/>
    <property type="match status" value="1"/>
</dbReference>